<gene>
    <name evidence="1" type="primary">NA</name>
</gene>
<organism>
    <name type="scientific">Influenza A virus (strain A/Duck/England/1/1956 H11N6)</name>
    <dbReference type="NCBI Taxonomy" id="383550"/>
    <lineage>
        <taxon>Viruses</taxon>
        <taxon>Riboviria</taxon>
        <taxon>Orthornavirae</taxon>
        <taxon>Negarnaviricota</taxon>
        <taxon>Polyploviricotina</taxon>
        <taxon>Insthoviricetes</taxon>
        <taxon>Articulavirales</taxon>
        <taxon>Orthomyxoviridae</taxon>
        <taxon>Alphainfluenzavirus</taxon>
        <taxon>Alphainfluenzavirus influenzae</taxon>
        <taxon>Influenza A virus</taxon>
    </lineage>
</organism>
<keyword id="KW-0002">3D-structure</keyword>
<keyword id="KW-0106">Calcium</keyword>
<keyword id="KW-1015">Disulfide bond</keyword>
<keyword id="KW-0325">Glycoprotein</keyword>
<keyword id="KW-0326">Glycosidase</keyword>
<keyword id="KW-1032">Host cell membrane</keyword>
<keyword id="KW-1043">Host membrane</keyword>
<keyword id="KW-0378">Hydrolase</keyword>
<keyword id="KW-0472">Membrane</keyword>
<keyword id="KW-0479">Metal-binding</keyword>
<keyword id="KW-0735">Signal-anchor</keyword>
<keyword id="KW-0812">Transmembrane</keyword>
<keyword id="KW-1133">Transmembrane helix</keyword>
<keyword id="KW-0946">Virion</keyword>
<proteinExistence type="evidence at protein level"/>
<accession>Q6XV27</accession>
<accession>Q83982</accession>
<comment type="function">
    <text evidence="1">Catalyzes the removal of terminal sialic acid residues from viral and cellular glycoconjugates. Cleaves off the terminal sialic acids on the glycosylated HA during virus budding to facilitate virus release. Additionally helps virus spread through the circulation by further removing sialic acids from the cell surface. These cleavages prevent self-aggregation and ensure the efficient spread of the progeny virus from cell to cell. Otherwise, infection would be limited to one round of replication. Described as a receptor-destroying enzyme because it cleaves a terminal sialic acid from the cellular receptors. May facilitate viral invasion of the upper airways by cleaving the sialic acid moieties on the mucin of the airway epithelial cells. Likely to plays a role in the budding process through its association with lipid rafts during intracellular transport. May additionally display a raft-association independent effect on budding. Plays a role in the determination of host range restriction on replication and virulence. Sialidase activity in late endosome/lysosome traffic seems to enhance virus replication.</text>
</comment>
<comment type="catalytic activity">
    <reaction evidence="1">
        <text>Hydrolysis of alpha-(2-&gt;3)-, alpha-(2-&gt;6)-, alpha-(2-&gt;8)- glycosidic linkages of terminal sialic acid residues in oligosaccharides, glycoproteins, glycolipids, colominic acid and synthetic substrates.</text>
        <dbReference type="EC" id="3.2.1.18"/>
    </reaction>
</comment>
<comment type="cofactor">
    <cofactor evidence="1 2 3">
        <name>Ca(2+)</name>
        <dbReference type="ChEBI" id="CHEBI:29108"/>
    </cofactor>
    <text evidence="2 3">Binds 1 Ca(2+) ion per subunit.</text>
</comment>
<comment type="activity regulation">
    <text evidence="1">Inhibited by the neuraminidase inhibitors zanamivir (Relenza) and oseltamivir (Tamiflu). These drugs interfere with the release of progeny virus from infected cells and are effective against all influenza strains. Resistance to neuraminidase inhibitors is quite rare.</text>
</comment>
<comment type="subunit">
    <text evidence="1 4 5">Homotetramer.</text>
</comment>
<comment type="subcellular location">
    <subcellularLocation>
        <location evidence="1">Virion membrane</location>
    </subcellularLocation>
    <subcellularLocation>
        <location evidence="1">Host apical cell membrane</location>
        <topology evidence="1">Single-pass type II membrane protein</topology>
    </subcellularLocation>
    <text evidence="1">Preferentially accumulates at the apical plasma membrane in infected polarized epithelial cells, which is the virus assembly site. Uses lipid rafts for cell surface transport and apical sorting. In the virion, forms a mushroom-shaped spike on the surface of the membrane.</text>
</comment>
<comment type="domain">
    <text evidence="1">Intact N-terminus is essential for virion morphogenesis. Possesses two apical sorting signals, one in the ectodomain, which is likely to be a glycan, and the other in the transmembrane domain. The transmembrane domain also plays a role in lipid raft association.</text>
</comment>
<comment type="PTM">
    <text evidence="1 2 3">N-glycosylated.</text>
</comment>
<comment type="miscellaneous">
    <text>The influenza A genome consist of 8 RNA segments. Genetic variation of hemagglutinin and/or neuraminidase genes results in the emergence of new influenza strains. The mechanism of variation can be the result of point mutations or the result of genetic reassortment between segments of two different strains.</text>
</comment>
<comment type="similarity">
    <text evidence="1">Belongs to the glycosyl hydrolase 34 family.</text>
</comment>
<dbReference type="EC" id="3.2.1.18" evidence="1"/>
<dbReference type="EMBL" id="AY207549">
    <property type="protein sequence ID" value="AAO62063.1"/>
    <property type="molecule type" value="Genomic_DNA"/>
</dbReference>
<dbReference type="EMBL" id="AB288846">
    <property type="protein sequence ID" value="BAF43436.1"/>
    <property type="molecule type" value="Genomic_RNA"/>
</dbReference>
<dbReference type="EMBL" id="CY014681">
    <property type="protein sequence ID" value="ABI84548.1"/>
    <property type="molecule type" value="Genomic_RNA"/>
</dbReference>
<dbReference type="EMBL" id="K01039">
    <property type="protein sequence ID" value="AAA43389.1"/>
    <property type="molecule type" value="Genomic_RNA"/>
</dbReference>
<dbReference type="PDB" id="1V0Z">
    <property type="method" value="X-ray"/>
    <property type="resolution" value="1.84 A"/>
    <property type="chains" value="A/B/C/D=82-470"/>
</dbReference>
<dbReference type="PDB" id="1W1X">
    <property type="method" value="X-ray"/>
    <property type="resolution" value="2.00 A"/>
    <property type="chains" value="A/B/C/D=82-470"/>
</dbReference>
<dbReference type="PDB" id="1W20">
    <property type="method" value="X-ray"/>
    <property type="resolution" value="2.08 A"/>
    <property type="chains" value="A/B/C/D=82-470"/>
</dbReference>
<dbReference type="PDB" id="1W21">
    <property type="method" value="X-ray"/>
    <property type="resolution" value="2.08 A"/>
    <property type="chains" value="A/B/C/D=82-470"/>
</dbReference>
<dbReference type="PDB" id="2CML">
    <property type="method" value="X-ray"/>
    <property type="resolution" value="2.15 A"/>
    <property type="chains" value="A/B/C/D=82-470"/>
</dbReference>
<dbReference type="PDB" id="6HFY">
    <property type="method" value="X-ray"/>
    <property type="resolution" value="1.65 A"/>
    <property type="chains" value="A/B/C/D=82-470"/>
</dbReference>
<dbReference type="PDB" id="6HG5">
    <property type="method" value="X-ray"/>
    <property type="resolution" value="1.60 A"/>
    <property type="chains" value="A/B/C/D=82-470"/>
</dbReference>
<dbReference type="PDB" id="6HGB">
    <property type="method" value="X-ray"/>
    <property type="resolution" value="1.50 A"/>
    <property type="chains" value="A/B/C/D=82-470"/>
</dbReference>
<dbReference type="PDBsum" id="1V0Z"/>
<dbReference type="PDBsum" id="1W1X"/>
<dbReference type="PDBsum" id="1W20"/>
<dbReference type="PDBsum" id="1W21"/>
<dbReference type="PDBsum" id="2CML"/>
<dbReference type="PDBsum" id="6HFY"/>
<dbReference type="PDBsum" id="6HG5"/>
<dbReference type="PDBsum" id="6HGB"/>
<dbReference type="SMR" id="Q6XV27"/>
<dbReference type="CAZy" id="GH34">
    <property type="family name" value="Glycoside Hydrolase Family 34"/>
</dbReference>
<dbReference type="GlyCosmos" id="Q6XV27">
    <property type="glycosylation" value="9 sites, No reported glycans"/>
</dbReference>
<dbReference type="EvolutionaryTrace" id="Q6XV27"/>
<dbReference type="PRO" id="PR:Q6XV27"/>
<dbReference type="Proteomes" id="UP000155465">
    <property type="component" value="Genome"/>
</dbReference>
<dbReference type="GO" id="GO:0020002">
    <property type="term" value="C:host cell plasma membrane"/>
    <property type="evidence" value="ECO:0007669"/>
    <property type="project" value="UniProtKB-SubCell"/>
</dbReference>
<dbReference type="GO" id="GO:0016020">
    <property type="term" value="C:membrane"/>
    <property type="evidence" value="ECO:0007669"/>
    <property type="project" value="UniProtKB-UniRule"/>
</dbReference>
<dbReference type="GO" id="GO:0055036">
    <property type="term" value="C:virion membrane"/>
    <property type="evidence" value="ECO:0007669"/>
    <property type="project" value="UniProtKB-SubCell"/>
</dbReference>
<dbReference type="GO" id="GO:0004308">
    <property type="term" value="F:exo-alpha-sialidase activity"/>
    <property type="evidence" value="ECO:0007669"/>
    <property type="project" value="UniProtKB-UniRule"/>
</dbReference>
<dbReference type="GO" id="GO:0046872">
    <property type="term" value="F:metal ion binding"/>
    <property type="evidence" value="ECO:0007669"/>
    <property type="project" value="UniProtKB-UniRule"/>
</dbReference>
<dbReference type="GO" id="GO:0005975">
    <property type="term" value="P:carbohydrate metabolic process"/>
    <property type="evidence" value="ECO:0007669"/>
    <property type="project" value="InterPro"/>
</dbReference>
<dbReference type="GO" id="GO:0046761">
    <property type="term" value="P:viral budding from plasma membrane"/>
    <property type="evidence" value="ECO:0007669"/>
    <property type="project" value="UniProtKB-UniRule"/>
</dbReference>
<dbReference type="Gene3D" id="2.120.10.10">
    <property type="match status" value="1"/>
</dbReference>
<dbReference type="HAMAP" id="MF_04071">
    <property type="entry name" value="INFV_NRAM"/>
    <property type="match status" value="1"/>
</dbReference>
<dbReference type="InterPro" id="IPR001860">
    <property type="entry name" value="Glyco_hydro_34"/>
</dbReference>
<dbReference type="InterPro" id="IPR036278">
    <property type="entry name" value="Sialidase_sf"/>
</dbReference>
<dbReference type="Pfam" id="PF00064">
    <property type="entry name" value="Neur"/>
    <property type="match status" value="1"/>
</dbReference>
<dbReference type="SUPFAM" id="SSF50939">
    <property type="entry name" value="Sialidases"/>
    <property type="match status" value="1"/>
</dbReference>
<feature type="chain" id="PRO_0000280127" description="Neuraminidase">
    <location>
        <begin position="1"/>
        <end position="470"/>
    </location>
</feature>
<feature type="topological domain" description="Intravirion" evidence="1">
    <location>
        <begin position="1"/>
        <end position="6"/>
    </location>
</feature>
<feature type="transmembrane region" description="Helical" evidence="1">
    <location>
        <begin position="7"/>
        <end position="27"/>
    </location>
</feature>
<feature type="topological domain" description="Virion surface" evidence="1">
    <location>
        <begin position="28"/>
        <end position="470"/>
    </location>
</feature>
<feature type="region of interest" description="Involved in apical transport and lipid raft association" evidence="1">
    <location>
        <begin position="11"/>
        <end position="33"/>
    </location>
</feature>
<feature type="region of interest" description="Hypervariable stalk region" evidence="1">
    <location>
        <begin position="36"/>
        <end position="88"/>
    </location>
</feature>
<feature type="region of interest" description="Head of neuraminidase" evidence="1">
    <location>
        <begin position="91"/>
        <end position="470"/>
    </location>
</feature>
<feature type="active site" description="Proton donor/acceptor" evidence="1">
    <location>
        <position position="151"/>
    </location>
</feature>
<feature type="active site" description="Nucleophile" evidence="1">
    <location>
        <position position="406"/>
    </location>
</feature>
<feature type="binding site" evidence="1">
    <location>
        <position position="118"/>
    </location>
    <ligand>
        <name>substrate</name>
    </ligand>
</feature>
<feature type="binding site" evidence="1">
    <location>
        <position position="152"/>
    </location>
    <ligand>
        <name>substrate</name>
    </ligand>
</feature>
<feature type="binding site" evidence="1">
    <location>
        <begin position="277"/>
        <end position="278"/>
    </location>
    <ligand>
        <name>substrate</name>
    </ligand>
</feature>
<feature type="binding site" evidence="1">
    <location>
        <position position="293"/>
    </location>
    <ligand>
        <name>substrate</name>
    </ligand>
</feature>
<feature type="binding site" evidence="1 2 3">
    <location>
        <position position="294"/>
    </location>
    <ligand>
        <name>Ca(2+)</name>
        <dbReference type="ChEBI" id="CHEBI:29108"/>
    </ligand>
</feature>
<feature type="binding site" evidence="1 2 3">
    <location>
        <position position="298"/>
    </location>
    <ligand>
        <name>Ca(2+)</name>
        <dbReference type="ChEBI" id="CHEBI:29108"/>
    </ligand>
</feature>
<feature type="binding site" evidence="1 2 3">
    <location>
        <position position="325"/>
    </location>
    <ligand>
        <name>Ca(2+)</name>
        <dbReference type="ChEBI" id="CHEBI:29108"/>
    </ligand>
</feature>
<feature type="binding site" evidence="2 3">
    <location>
        <position position="348"/>
    </location>
    <ligand>
        <name>Ca(2+)</name>
        <dbReference type="ChEBI" id="CHEBI:29108"/>
    </ligand>
</feature>
<feature type="binding site" evidence="1">
    <location>
        <position position="372"/>
    </location>
    <ligand>
        <name>substrate</name>
    </ligand>
</feature>
<feature type="glycosylation site" description="N-linked (GlcNAc...) asparagine; by host" evidence="1">
    <location>
        <position position="51"/>
    </location>
</feature>
<feature type="glycosylation site" description="N-linked (GlcNAc...) asparagine; by host" evidence="1">
    <location>
        <position position="54"/>
    </location>
</feature>
<feature type="glycosylation site" description="N-linked (GlcNAc...) asparagine; by host" evidence="1">
    <location>
        <position position="62"/>
    </location>
</feature>
<feature type="glycosylation site" description="N-linked (GlcNAc...) asparagine; by host" evidence="1">
    <location>
        <position position="67"/>
    </location>
</feature>
<feature type="glycosylation site" description="N-linked (GlcNAc...) asparagine; by host" evidence="1">
    <location>
        <position position="70"/>
    </location>
</feature>
<feature type="glycosylation site" description="N-linked (GlcNAc...) asparagine; by host" evidence="1 2">
    <location>
        <position position="86"/>
    </location>
</feature>
<feature type="glycosylation site" description="N-linked (GlcNAc...) asparagine; by host" evidence="1 2 3">
    <location>
        <position position="146"/>
    </location>
</feature>
<feature type="glycosylation site" description="N-linked (GlcNAc...) asparagine; by host" evidence="1 2">
    <location>
        <position position="201"/>
    </location>
</feature>
<feature type="glycosylation site" description="N-linked (GlcNAc...) asparagine; by host" evidence="1">
    <location>
        <position position="402"/>
    </location>
</feature>
<feature type="disulfide bond" evidence="1">
    <location>
        <begin position="92"/>
        <end position="419"/>
    </location>
</feature>
<feature type="disulfide bond" evidence="1">
    <location>
        <begin position="124"/>
        <end position="129"/>
    </location>
</feature>
<feature type="disulfide bond">
    <location>
        <begin position="176"/>
        <end position="194"/>
    </location>
</feature>
<feature type="disulfide bond" evidence="1">
    <location>
        <begin position="184"/>
        <end position="231"/>
    </location>
</feature>
<feature type="disulfide bond" evidence="1">
    <location>
        <begin position="233"/>
        <end position="238"/>
    </location>
</feature>
<feature type="disulfide bond" evidence="1">
    <location>
        <begin position="279"/>
        <end position="292"/>
    </location>
</feature>
<feature type="disulfide bond" evidence="1">
    <location>
        <begin position="281"/>
        <end position="290"/>
    </location>
</feature>
<feature type="disulfide bond" evidence="1">
    <location>
        <begin position="319"/>
        <end position="337"/>
    </location>
</feature>
<feature type="disulfide bond" evidence="1">
    <location>
        <begin position="423"/>
        <end position="449"/>
    </location>
</feature>
<feature type="strand" evidence="8">
    <location>
        <begin position="95"/>
        <end position="102"/>
    </location>
</feature>
<feature type="helix" evidence="8">
    <location>
        <begin position="105"/>
        <end position="109"/>
    </location>
</feature>
<feature type="strand" evidence="8">
    <location>
        <begin position="115"/>
        <end position="125"/>
    </location>
</feature>
<feature type="strand" evidence="8">
    <location>
        <begin position="128"/>
        <end position="142"/>
    </location>
</feature>
<feature type="helix" evidence="8">
    <location>
        <begin position="143"/>
        <end position="145"/>
    </location>
</feature>
<feature type="turn" evidence="8">
    <location>
        <begin position="146"/>
        <end position="149"/>
    </location>
</feature>
<feature type="strand" evidence="8">
    <location>
        <begin position="157"/>
        <end position="162"/>
    </location>
</feature>
<feature type="turn" evidence="8">
    <location>
        <begin position="169"/>
        <end position="171"/>
    </location>
</feature>
<feature type="strand" evidence="8">
    <location>
        <begin position="173"/>
        <end position="185"/>
    </location>
</feature>
<feature type="strand" evidence="8">
    <location>
        <begin position="187"/>
        <end position="197"/>
    </location>
</feature>
<feature type="helix" evidence="7">
    <location>
        <begin position="199"/>
        <end position="201"/>
    </location>
</feature>
<feature type="strand" evidence="8">
    <location>
        <begin position="203"/>
        <end position="208"/>
    </location>
</feature>
<feature type="strand" evidence="8">
    <location>
        <begin position="211"/>
        <end position="217"/>
    </location>
</feature>
<feature type="strand" evidence="8">
    <location>
        <begin position="219"/>
        <end position="222"/>
    </location>
</feature>
<feature type="strand" evidence="8">
    <location>
        <begin position="237"/>
        <end position="245"/>
    </location>
</feature>
<feature type="strand" evidence="8">
    <location>
        <begin position="247"/>
        <end position="249"/>
    </location>
</feature>
<feature type="strand" evidence="8">
    <location>
        <begin position="252"/>
        <end position="259"/>
    </location>
</feature>
<feature type="strand" evidence="8">
    <location>
        <begin position="262"/>
        <end position="268"/>
    </location>
</feature>
<feature type="strand" evidence="8">
    <location>
        <begin position="277"/>
        <end position="284"/>
    </location>
</feature>
<feature type="strand" evidence="8">
    <location>
        <begin position="287"/>
        <end position="293"/>
    </location>
</feature>
<feature type="strand" evidence="8">
    <location>
        <begin position="295"/>
        <end position="297"/>
    </location>
</feature>
<feature type="strand" evidence="8">
    <location>
        <begin position="302"/>
        <end position="307"/>
    </location>
</feature>
<feature type="turn" evidence="8">
    <location>
        <begin position="308"/>
        <end position="311"/>
    </location>
</feature>
<feature type="strand" evidence="8">
    <location>
        <begin position="312"/>
        <end position="317"/>
    </location>
</feature>
<feature type="strand" evidence="6">
    <location>
        <begin position="320"/>
        <end position="322"/>
    </location>
</feature>
<feature type="strand" evidence="8">
    <location>
        <begin position="325"/>
        <end position="327"/>
    </location>
</feature>
<feature type="strand" evidence="8">
    <location>
        <begin position="337"/>
        <end position="339"/>
    </location>
</feature>
<feature type="strand" evidence="8">
    <location>
        <begin position="362"/>
        <end position="365"/>
    </location>
</feature>
<feature type="strand" evidence="8">
    <location>
        <begin position="367"/>
        <end position="379"/>
    </location>
</feature>
<feature type="turn" evidence="8">
    <location>
        <begin position="381"/>
        <end position="385"/>
    </location>
</feature>
<feature type="strand" evidence="8">
    <location>
        <begin position="392"/>
        <end position="403"/>
    </location>
</feature>
<feature type="strand" evidence="8">
    <location>
        <begin position="407"/>
        <end position="410"/>
    </location>
</feature>
<feature type="strand" evidence="8">
    <location>
        <begin position="415"/>
        <end position="420"/>
    </location>
</feature>
<feature type="strand" evidence="8">
    <location>
        <begin position="423"/>
        <end position="431"/>
    </location>
</feature>
<feature type="turn" evidence="8">
    <location>
        <begin position="432"/>
        <end position="434"/>
    </location>
</feature>
<feature type="strand" evidence="8">
    <location>
        <begin position="441"/>
        <end position="453"/>
    </location>
</feature>
<feature type="helix" evidence="8">
    <location>
        <begin position="466"/>
        <end position="469"/>
    </location>
</feature>
<organismHost>
    <name type="scientific">Aves</name>
    <dbReference type="NCBI Taxonomy" id="8782"/>
</organismHost>
<protein>
    <recommendedName>
        <fullName evidence="1">Neuraminidase</fullName>
        <ecNumber evidence="1">3.2.1.18</ecNumber>
    </recommendedName>
</protein>
<name>NRAM_I56A2</name>
<sequence length="470" mass="51470">MNPNQKIICISATGMTLSVVSLLVGIANLGLNIGLHYKVGDTPNVNIPNVNGTNSTTTIINNNTQNNFTNITNIIQSKGGERTFLNLTKPLCEVNSWHILSKDNAIRIGEDAHILVTREPYLSCDPQGCRMFALSQGTTLRGRHANGTIHDRSPFRALISWEMGQAPSPYNTRVECIGWSSTSCHDGMSRMSICMSGPNNNASAVVWYGGRPITEIPSWAGNILRTQESECVCHKGVCPVVMTDGPANNRAATKIIYFKEGKIQKIEELAGNAQHIEECSCYGAGGVIKCICRDNWKGANRPVITIDPEMMTHTSKYLCSKVLTDTSRPNDPTNGNCDAPITGGSPDPGVKGFAFLDGENSWLGRTISKDSRSGYEMLKVPNAETDIQSGPISNQVIVNNQNWSGYSGAFIDYWANKECFNPCFYVELIRGRPKESSVLWTSNSIVALCGSKKRLGSWSWHDGAEIIYFE</sequence>
<evidence type="ECO:0000255" key="1">
    <source>
        <dbReference type="HAMAP-Rule" id="MF_04071"/>
    </source>
</evidence>
<evidence type="ECO:0000269" key="2">
    <source ref="7"/>
</evidence>
<evidence type="ECO:0000269" key="3">
    <source ref="8"/>
</evidence>
<evidence type="ECO:0000305" key="4">
    <source ref="7"/>
</evidence>
<evidence type="ECO:0000305" key="5">
    <source ref="8"/>
</evidence>
<evidence type="ECO:0007829" key="6">
    <source>
        <dbReference type="PDB" id="2CML"/>
    </source>
</evidence>
<evidence type="ECO:0007829" key="7">
    <source>
        <dbReference type="PDB" id="6HFY"/>
    </source>
</evidence>
<evidence type="ECO:0007829" key="8">
    <source>
        <dbReference type="PDB" id="6HGB"/>
    </source>
</evidence>
<reference key="1">
    <citation type="submission" date="2002-12" db="EMBL/GenBank/DDBJ databases">
        <title>Genetic analysis of multiple N3, N4, and N6 influenza A virus neuraminidase genes.</title>
        <authorList>
            <person name="Webby R.J."/>
            <person name="Humberd J.L."/>
            <person name="Krauss S.L."/>
        </authorList>
    </citation>
    <scope>NUCLEOTIDE SEQUENCE [GENOMIC RNA]</scope>
</reference>
<reference key="2">
    <citation type="journal article" date="2006" name="Science">
        <title>Large-scale sequence analysis of avian influenza isolates.</title>
        <authorList>
            <person name="Obenauer J.C."/>
            <person name="Denson J."/>
            <person name="Mehta P.K."/>
            <person name="Su X."/>
            <person name="Mukatira S."/>
            <person name="Finkelstein D.B."/>
            <person name="Xu X."/>
            <person name="Wang J."/>
            <person name="Ma J."/>
            <person name="Fan Y."/>
            <person name="Rakestraw K.M."/>
            <person name="Webster R.G."/>
            <person name="Hoffmann E."/>
            <person name="Krauss S."/>
            <person name="Zheng J."/>
            <person name="Zhang Z."/>
            <person name="Naeve C.W."/>
        </authorList>
    </citation>
    <scope>NUCLEOTIDE SEQUENCE [GENOMIC RNA]</scope>
</reference>
<reference key="3">
    <citation type="journal article" date="1982" name="Virology">
        <title>Sequence variation at the 3' end of the neuraminidase gene from 39 influenza type A viruses.</title>
        <authorList>
            <person name="Blok J."/>
            <person name="Air G.M."/>
        </authorList>
    </citation>
    <scope>NUCLEOTIDE SEQUENCE [GENOMIC RNA] OF 1-71</scope>
</reference>
<reference key="4">
    <citation type="journal article" date="2004" name="Virus Res.">
        <title>Assembly and budding of influenza virus.</title>
        <authorList>
            <person name="Nayak D.P."/>
            <person name="Hui E.K."/>
            <person name="Barman S."/>
        </authorList>
    </citation>
    <scope>REVIEW</scope>
</reference>
<reference key="5">
    <citation type="journal article" date="2005" name="N. Engl. J. Med.">
        <title>Neuraminidase inhibitors for influenza.</title>
        <authorList>
            <person name="Moscona A."/>
        </authorList>
    </citation>
    <scope>REVIEW</scope>
</reference>
<reference key="6">
    <citation type="journal article" date="2005" name="Biol. Pharm. Bull.">
        <title>Sialobiology of influenza: molecular mechanism of host range variation of influenza viruses.</title>
        <authorList>
            <person name="Suzuki Y."/>
        </authorList>
    </citation>
    <scope>REVIEW</scope>
</reference>
<reference key="7">
    <citation type="submission" date="2004-04" db="PDB data bank">
        <title>The crystal structure of influenza type A virus neuraminidase of the N6 subtype at 1.85 A resolution.</title>
        <authorList>
            <person name="Rudino-Pinera E."/>
            <person name="Crennell S.J."/>
            <person name="Webster R.G."/>
            <person name="Laver W.G."/>
            <person name="Garman E.F."/>
        </authorList>
    </citation>
    <scope>X-RAY CRYSTALLOGRAPHY (1.84 ANGSTROMS) OF 82-470 IN COMPLEX WITH CALCIUM AND SUBSTRATE ANALOG</scope>
    <scope>COFACTOR</scope>
    <scope>SUBUNIT</scope>
    <scope>DISULFIDE BONDS</scope>
    <scope>GLYCOSYLATION AT ASN-86; ASN-146 AND ASN-201</scope>
</reference>
<reference key="8">
    <citation type="submission" date="2006-05" db="PDB data bank">
        <title>The crystal structure of type A influenza virus neuraminidase of the N6 subtype reveals the existence of two separate Neu5Ac binding sites.</title>
        <authorList>
            <person name="Rudino-Pinera E."/>
            <person name="Tunnah P."/>
            <person name="Crennell S.J."/>
            <person name="Webster R.G."/>
            <person name="Laver W.G."/>
            <person name="Garman E.F."/>
        </authorList>
    </citation>
    <scope>X-RAY CRYSTALLOGRAPHY (2.15 ANGSTROMS) OF 82-470 IN COMPLEX WITH CALCIUM AND ZANAMIVIR</scope>
    <scope>COFACTOR</scope>
    <scope>SUBUNIT</scope>
    <scope>DISULFIDE BONDS</scope>
    <scope>GLYCOSYLATION AT ASN-146</scope>
</reference>